<name>RL11_ORYSJ</name>
<gene>
    <name type="primary">RPL11</name>
    <name type="ordered locus">Os05g0207300</name>
    <name type="ordered locus">LOC_Os05g11710</name>
    <name type="ORF">OJ1430_B02.2</name>
    <name evidence="3" type="ORF">OsJ_17505</name>
    <name evidence="4" type="ORF">OsJ_21642</name>
</gene>
<reference key="1">
    <citation type="journal article" date="2005" name="Mol. Genet. Genomics">
        <title>A fine physical map of the rice chromosome 5.</title>
        <authorList>
            <person name="Cheng C.-H."/>
            <person name="Chung M.C."/>
            <person name="Liu S.-M."/>
            <person name="Chen S.-K."/>
            <person name="Kao F.Y."/>
            <person name="Lin S.-J."/>
            <person name="Hsiao S.-H."/>
            <person name="Tseng I.C."/>
            <person name="Hsing Y.-I.C."/>
            <person name="Wu H.-P."/>
            <person name="Chen C.-S."/>
            <person name="Shaw J.-F."/>
            <person name="Wu J."/>
            <person name="Matsumoto T."/>
            <person name="Sasaki T."/>
            <person name="Chen H.-C."/>
            <person name="Chow T.-Y."/>
        </authorList>
    </citation>
    <scope>NUCLEOTIDE SEQUENCE [LARGE SCALE GENOMIC DNA]</scope>
    <source>
        <strain>cv. Nipponbare</strain>
    </source>
</reference>
<reference key="2">
    <citation type="journal article" date="2005" name="Nature">
        <title>The map-based sequence of the rice genome.</title>
        <authorList>
            <consortium name="International rice genome sequencing project (IRGSP)"/>
        </authorList>
    </citation>
    <scope>NUCLEOTIDE SEQUENCE [LARGE SCALE GENOMIC DNA]</scope>
    <source>
        <strain>cv. Nipponbare</strain>
    </source>
</reference>
<reference key="3">
    <citation type="journal article" date="2008" name="Nucleic Acids Res.">
        <title>The rice annotation project database (RAP-DB): 2008 update.</title>
        <authorList>
            <consortium name="The rice annotation project (RAP)"/>
        </authorList>
    </citation>
    <scope>GENOME REANNOTATION</scope>
    <source>
        <strain>cv. Nipponbare</strain>
    </source>
</reference>
<reference key="4">
    <citation type="journal article" date="2013" name="Rice">
        <title>Improvement of the Oryza sativa Nipponbare reference genome using next generation sequence and optical map data.</title>
        <authorList>
            <person name="Kawahara Y."/>
            <person name="de la Bastide M."/>
            <person name="Hamilton J.P."/>
            <person name="Kanamori H."/>
            <person name="McCombie W.R."/>
            <person name="Ouyang S."/>
            <person name="Schwartz D.C."/>
            <person name="Tanaka T."/>
            <person name="Wu J."/>
            <person name="Zhou S."/>
            <person name="Childs K.L."/>
            <person name="Davidson R.M."/>
            <person name="Lin H."/>
            <person name="Quesada-Ocampo L."/>
            <person name="Vaillancourt B."/>
            <person name="Sakai H."/>
            <person name="Lee S.S."/>
            <person name="Kim J."/>
            <person name="Numa H."/>
            <person name="Itoh T."/>
            <person name="Buell C.R."/>
            <person name="Matsumoto T."/>
        </authorList>
    </citation>
    <scope>GENOME REANNOTATION</scope>
    <source>
        <strain>cv. Nipponbare</strain>
    </source>
</reference>
<reference key="5">
    <citation type="journal article" date="2005" name="PLoS Biol.">
        <title>The genomes of Oryza sativa: a history of duplications.</title>
        <authorList>
            <person name="Yu J."/>
            <person name="Wang J."/>
            <person name="Lin W."/>
            <person name="Li S."/>
            <person name="Li H."/>
            <person name="Zhou J."/>
            <person name="Ni P."/>
            <person name="Dong W."/>
            <person name="Hu S."/>
            <person name="Zeng C."/>
            <person name="Zhang J."/>
            <person name="Zhang Y."/>
            <person name="Li R."/>
            <person name="Xu Z."/>
            <person name="Li S."/>
            <person name="Li X."/>
            <person name="Zheng H."/>
            <person name="Cong L."/>
            <person name="Lin L."/>
            <person name="Yin J."/>
            <person name="Geng J."/>
            <person name="Li G."/>
            <person name="Shi J."/>
            <person name="Liu J."/>
            <person name="Lv H."/>
            <person name="Li J."/>
            <person name="Wang J."/>
            <person name="Deng Y."/>
            <person name="Ran L."/>
            <person name="Shi X."/>
            <person name="Wang X."/>
            <person name="Wu Q."/>
            <person name="Li C."/>
            <person name="Ren X."/>
            <person name="Wang J."/>
            <person name="Wang X."/>
            <person name="Li D."/>
            <person name="Liu D."/>
            <person name="Zhang X."/>
            <person name="Ji Z."/>
            <person name="Zhao W."/>
            <person name="Sun Y."/>
            <person name="Zhang Z."/>
            <person name="Bao J."/>
            <person name="Han Y."/>
            <person name="Dong L."/>
            <person name="Ji J."/>
            <person name="Chen P."/>
            <person name="Wu S."/>
            <person name="Liu J."/>
            <person name="Xiao Y."/>
            <person name="Bu D."/>
            <person name="Tan J."/>
            <person name="Yang L."/>
            <person name="Ye C."/>
            <person name="Zhang J."/>
            <person name="Xu J."/>
            <person name="Zhou Y."/>
            <person name="Yu Y."/>
            <person name="Zhang B."/>
            <person name="Zhuang S."/>
            <person name="Wei H."/>
            <person name="Liu B."/>
            <person name="Lei M."/>
            <person name="Yu H."/>
            <person name="Li Y."/>
            <person name="Xu H."/>
            <person name="Wei S."/>
            <person name="He X."/>
            <person name="Fang L."/>
            <person name="Zhang Z."/>
            <person name="Zhang Y."/>
            <person name="Huang X."/>
            <person name="Su Z."/>
            <person name="Tong W."/>
            <person name="Li J."/>
            <person name="Tong Z."/>
            <person name="Li S."/>
            <person name="Ye J."/>
            <person name="Wang L."/>
            <person name="Fang L."/>
            <person name="Lei T."/>
            <person name="Chen C.-S."/>
            <person name="Chen H.-C."/>
            <person name="Xu Z."/>
            <person name="Li H."/>
            <person name="Huang H."/>
            <person name="Zhang F."/>
            <person name="Xu H."/>
            <person name="Li N."/>
            <person name="Zhao C."/>
            <person name="Li S."/>
            <person name="Dong L."/>
            <person name="Huang Y."/>
            <person name="Li L."/>
            <person name="Xi Y."/>
            <person name="Qi Q."/>
            <person name="Li W."/>
            <person name="Zhang B."/>
            <person name="Hu W."/>
            <person name="Zhang Y."/>
            <person name="Tian X."/>
            <person name="Jiao Y."/>
            <person name="Liang X."/>
            <person name="Jin J."/>
            <person name="Gao L."/>
            <person name="Zheng W."/>
            <person name="Hao B."/>
            <person name="Liu S.-M."/>
            <person name="Wang W."/>
            <person name="Yuan L."/>
            <person name="Cao M."/>
            <person name="McDermott J."/>
            <person name="Samudrala R."/>
            <person name="Wang J."/>
            <person name="Wong G.K.-S."/>
            <person name="Yang H."/>
        </authorList>
    </citation>
    <scope>NUCLEOTIDE SEQUENCE [LARGE SCALE GENOMIC DNA]</scope>
    <source>
        <strain>cv. Nipponbare</strain>
    </source>
</reference>
<reference key="6">
    <citation type="journal article" date="2003" name="Science">
        <title>Collection, mapping, and annotation of over 28,000 cDNA clones from japonica rice.</title>
        <authorList>
            <consortium name="The rice full-length cDNA consortium"/>
        </authorList>
    </citation>
    <scope>NUCLEOTIDE SEQUENCE [LARGE SCALE MRNA]</scope>
    <source>
        <strain>cv. Nipponbare</strain>
    </source>
</reference>
<comment type="function">
    <text evidence="1">Component of the ribosome, a large ribonucleoprotein complex responsible for the synthesis of proteins in the cell. The small ribosomal subunit (SSU) binds messenger RNAs (mRNAs) and translates the encoded message by selecting cognate aminoacyl-transfer RNA (tRNA) molecules. The large subunit (LSU) contains the ribosomal catalytic site termed the peptidyl transferase center (PTC), which catalyzes the formation of peptide bonds, thereby polymerizing the amino acids delivered by tRNAs into a polypeptide chain. The nascent polypeptides leave the ribosome through a tunnel in the LSU and interact with protein factors that function in enzymatic processing, targeting, and the membrane insertion of nascent chains at the exit of the ribosomal tunnel.</text>
</comment>
<comment type="subunit">
    <text evidence="1">Component of the large ribosomal subunit.</text>
</comment>
<comment type="subcellular location">
    <subcellularLocation>
        <location evidence="1">Nucleus</location>
    </subcellularLocation>
    <subcellularLocation>
        <location evidence="1">Cytoplasm</location>
    </subcellularLocation>
</comment>
<comment type="similarity">
    <text evidence="2">Belongs to the universal ribosomal protein uL5 family.</text>
</comment>
<organism>
    <name type="scientific">Oryza sativa subsp. japonica</name>
    <name type="common">Rice</name>
    <dbReference type="NCBI Taxonomy" id="39947"/>
    <lineage>
        <taxon>Eukaryota</taxon>
        <taxon>Viridiplantae</taxon>
        <taxon>Streptophyta</taxon>
        <taxon>Embryophyta</taxon>
        <taxon>Tracheophyta</taxon>
        <taxon>Spermatophyta</taxon>
        <taxon>Magnoliopsida</taxon>
        <taxon>Liliopsida</taxon>
        <taxon>Poales</taxon>
        <taxon>Poaceae</taxon>
        <taxon>BOP clade</taxon>
        <taxon>Oryzoideae</taxon>
        <taxon>Oryzeae</taxon>
        <taxon>Oryzinae</taxon>
        <taxon>Oryza</taxon>
        <taxon>Oryza sativa</taxon>
    </lineage>
</organism>
<sequence>MASEKKQSNPMREIKVQKLVLNISVGESGDRLTRASKVLEQLSGQSPVFSKARYTVRSFGIRRNEKIACYVTVRGEKAMQLLESGLKVKEYELLRRNFSETGCFGFGIQEHIDLGIKYDPSTGIYGMDFYVVLERAGYRVARRRRCKSRVGIQHRVTKEDAMKWFQVKYEGVILNKAQANTS</sequence>
<keyword id="KW-0963">Cytoplasm</keyword>
<keyword id="KW-0539">Nucleus</keyword>
<keyword id="KW-1185">Reference proteome</keyword>
<keyword id="KW-0687">Ribonucleoprotein</keyword>
<keyword id="KW-0689">Ribosomal protein</keyword>
<keyword id="KW-0694">RNA-binding</keyword>
<keyword id="KW-0699">rRNA-binding</keyword>
<dbReference type="EMBL" id="AC104280">
    <property type="protein sequence ID" value="AAU90185.1"/>
    <property type="molecule type" value="Genomic_DNA"/>
</dbReference>
<dbReference type="EMBL" id="AP008211">
    <property type="protein sequence ID" value="BAF16813.1"/>
    <property type="molecule type" value="Genomic_DNA"/>
</dbReference>
<dbReference type="EMBL" id="AP008212">
    <property type="protein sequence ID" value="BAF19748.2"/>
    <property type="molecule type" value="Genomic_DNA"/>
</dbReference>
<dbReference type="EMBL" id="AP014961">
    <property type="protein sequence ID" value="BAS92760.1"/>
    <property type="molecule type" value="Genomic_DNA"/>
</dbReference>
<dbReference type="EMBL" id="CM000142">
    <property type="protein sequence ID" value="EEE62702.1"/>
    <property type="molecule type" value="Genomic_DNA"/>
</dbReference>
<dbReference type="EMBL" id="CM000143">
    <property type="protein sequence ID" value="EEE65858.1"/>
    <property type="molecule type" value="Genomic_DNA"/>
</dbReference>
<dbReference type="EMBL" id="AK070605">
    <property type="protein sequence ID" value="BAG92054.1"/>
    <property type="molecule type" value="mRNA"/>
</dbReference>
<dbReference type="RefSeq" id="XP_015640554.1">
    <property type="nucleotide sequence ID" value="XM_015785068.1"/>
</dbReference>
<dbReference type="SMR" id="Q0DK10"/>
<dbReference type="FunCoup" id="Q0DK10">
    <property type="interactions" value="2220"/>
</dbReference>
<dbReference type="STRING" id="39947.Q0DK10"/>
<dbReference type="PaxDb" id="39947-Q0DK10"/>
<dbReference type="EnsemblPlants" id="Os05t0207300-01">
    <property type="protein sequence ID" value="Os05t0207300-01"/>
    <property type="gene ID" value="Os05g0207300"/>
</dbReference>
<dbReference type="Gramene" id="Os05t0207300-01">
    <property type="protein sequence ID" value="Os05t0207300-01"/>
    <property type="gene ID" value="Os05g0207300"/>
</dbReference>
<dbReference type="KEGG" id="dosa:Os05g0207300"/>
<dbReference type="KEGG" id="dosa:Os06g0550000"/>
<dbReference type="KEGG" id="osa:4341262"/>
<dbReference type="eggNOG" id="KOG0397">
    <property type="taxonomic scope" value="Eukaryota"/>
</dbReference>
<dbReference type="HOGENOM" id="CLU_061015_3_0_1"/>
<dbReference type="InParanoid" id="Q0DK10"/>
<dbReference type="OMA" id="NPMKELK"/>
<dbReference type="OrthoDB" id="1690215at2759"/>
<dbReference type="Proteomes" id="UP000000763">
    <property type="component" value="Chromosome 5"/>
</dbReference>
<dbReference type="Proteomes" id="UP000000763">
    <property type="component" value="Chromosome 6"/>
</dbReference>
<dbReference type="Proteomes" id="UP000007752">
    <property type="component" value="Chromosome 5"/>
</dbReference>
<dbReference type="Proteomes" id="UP000007752">
    <property type="component" value="Chromosome 6"/>
</dbReference>
<dbReference type="Proteomes" id="UP000059680">
    <property type="component" value="Chromosome 5"/>
</dbReference>
<dbReference type="GO" id="GO:0022625">
    <property type="term" value="C:cytosolic large ribosomal subunit"/>
    <property type="evidence" value="ECO:0000318"/>
    <property type="project" value="GO_Central"/>
</dbReference>
<dbReference type="GO" id="GO:0005634">
    <property type="term" value="C:nucleus"/>
    <property type="evidence" value="ECO:0007669"/>
    <property type="project" value="UniProtKB-SubCell"/>
</dbReference>
<dbReference type="GO" id="GO:0003723">
    <property type="term" value="F:RNA binding"/>
    <property type="evidence" value="ECO:0000318"/>
    <property type="project" value="GO_Central"/>
</dbReference>
<dbReference type="GO" id="GO:0019843">
    <property type="term" value="F:rRNA binding"/>
    <property type="evidence" value="ECO:0007669"/>
    <property type="project" value="UniProtKB-KW"/>
</dbReference>
<dbReference type="GO" id="GO:0003735">
    <property type="term" value="F:structural constituent of ribosome"/>
    <property type="evidence" value="ECO:0000318"/>
    <property type="project" value="GO_Central"/>
</dbReference>
<dbReference type="GO" id="GO:0006412">
    <property type="term" value="P:translation"/>
    <property type="evidence" value="ECO:0000318"/>
    <property type="project" value="GO_Central"/>
</dbReference>
<dbReference type="FunFam" id="3.30.1440.10:FF:000002">
    <property type="entry name" value="60S ribosomal protein L11"/>
    <property type="match status" value="1"/>
</dbReference>
<dbReference type="Gene3D" id="3.30.1440.10">
    <property type="match status" value="1"/>
</dbReference>
<dbReference type="InterPro" id="IPR002132">
    <property type="entry name" value="Ribosomal_uL5"/>
</dbReference>
<dbReference type="InterPro" id="IPR031309">
    <property type="entry name" value="Ribosomal_uL5_C"/>
</dbReference>
<dbReference type="InterPro" id="IPR020929">
    <property type="entry name" value="Ribosomal_uL5_CS"/>
</dbReference>
<dbReference type="InterPro" id="IPR022803">
    <property type="entry name" value="Ribosomal_uL5_dom_sf"/>
</dbReference>
<dbReference type="InterPro" id="IPR031310">
    <property type="entry name" value="Ribosomal_uL5_N"/>
</dbReference>
<dbReference type="NCBIfam" id="NF003258">
    <property type="entry name" value="PRK04219.1"/>
    <property type="match status" value="1"/>
</dbReference>
<dbReference type="PANTHER" id="PTHR11994">
    <property type="entry name" value="60S RIBOSOMAL PROTEIN L11-RELATED"/>
    <property type="match status" value="1"/>
</dbReference>
<dbReference type="Pfam" id="PF00281">
    <property type="entry name" value="Ribosomal_L5"/>
    <property type="match status" value="1"/>
</dbReference>
<dbReference type="Pfam" id="PF00673">
    <property type="entry name" value="Ribosomal_L5_C"/>
    <property type="match status" value="1"/>
</dbReference>
<dbReference type="PIRSF" id="PIRSF002161">
    <property type="entry name" value="Ribosomal_L5"/>
    <property type="match status" value="1"/>
</dbReference>
<dbReference type="SUPFAM" id="SSF55282">
    <property type="entry name" value="RL5-like"/>
    <property type="match status" value="1"/>
</dbReference>
<dbReference type="PROSITE" id="PS00358">
    <property type="entry name" value="RIBOSOMAL_L5"/>
    <property type="match status" value="1"/>
</dbReference>
<evidence type="ECO:0000250" key="1">
    <source>
        <dbReference type="UniProtKB" id="P0C0W9"/>
    </source>
</evidence>
<evidence type="ECO:0000305" key="2"/>
<evidence type="ECO:0000312" key="3">
    <source>
        <dbReference type="EMBL" id="EEE62702.1"/>
    </source>
</evidence>
<evidence type="ECO:0000312" key="4">
    <source>
        <dbReference type="EMBL" id="EEE65858.1"/>
    </source>
</evidence>
<proteinExistence type="evidence at transcript level"/>
<feature type="chain" id="PRO_0000125099" description="Large ribosomal subunit protein uL5">
    <location>
        <begin position="1"/>
        <end position="182"/>
    </location>
</feature>
<protein>
    <recommendedName>
        <fullName evidence="2">Large ribosomal subunit protein uL5</fullName>
    </recommendedName>
    <alternativeName>
        <fullName>60S ribosomal protein L11</fullName>
    </alternativeName>
</protein>
<accession>Q0DK10</accession>
<accession>B7EI57</accession>
<accession>O22540</accession>
<accession>Q0DBM5</accession>
<accession>Q60EZ4</accession>